<organism>
    <name type="scientific">Roseobacter denitrificans (strain ATCC 33942 / OCh 114)</name>
    <name type="common">Erythrobacter sp. (strain OCh 114)</name>
    <name type="synonym">Roseobacter denitrificans</name>
    <dbReference type="NCBI Taxonomy" id="375451"/>
    <lineage>
        <taxon>Bacteria</taxon>
        <taxon>Pseudomonadati</taxon>
        <taxon>Pseudomonadota</taxon>
        <taxon>Alphaproteobacteria</taxon>
        <taxon>Rhodobacterales</taxon>
        <taxon>Roseobacteraceae</taxon>
        <taxon>Roseobacter</taxon>
    </lineage>
</organism>
<protein>
    <recommendedName>
        <fullName evidence="1">1-deoxy-D-xylulose-5-phosphate synthase 2</fullName>
        <ecNumber evidence="1">2.2.1.7</ecNumber>
    </recommendedName>
    <alternativeName>
        <fullName evidence="1">1-deoxyxylulose-5-phosphate synthase 2</fullName>
        <shortName evidence="1">DXP synthase 2</shortName>
        <shortName evidence="1">DXPS 2</shortName>
    </alternativeName>
</protein>
<feature type="chain" id="PRO_0000256479" description="1-deoxy-D-xylulose-5-phosphate synthase 2">
    <location>
        <begin position="1"/>
        <end position="642"/>
    </location>
</feature>
<feature type="binding site" evidence="1">
    <location>
        <position position="79"/>
    </location>
    <ligand>
        <name>thiamine diphosphate</name>
        <dbReference type="ChEBI" id="CHEBI:58937"/>
    </ligand>
</feature>
<feature type="binding site" evidence="1">
    <location>
        <begin position="120"/>
        <end position="122"/>
    </location>
    <ligand>
        <name>thiamine diphosphate</name>
        <dbReference type="ChEBI" id="CHEBI:58937"/>
    </ligand>
</feature>
<feature type="binding site" evidence="1">
    <location>
        <position position="155"/>
    </location>
    <ligand>
        <name>Mg(2+)</name>
        <dbReference type="ChEBI" id="CHEBI:18420"/>
    </ligand>
</feature>
<feature type="binding site" evidence="1">
    <location>
        <begin position="156"/>
        <end position="157"/>
    </location>
    <ligand>
        <name>thiamine diphosphate</name>
        <dbReference type="ChEBI" id="CHEBI:58937"/>
    </ligand>
</feature>
<feature type="binding site" evidence="1">
    <location>
        <position position="184"/>
    </location>
    <ligand>
        <name>Mg(2+)</name>
        <dbReference type="ChEBI" id="CHEBI:18420"/>
    </ligand>
</feature>
<feature type="binding site" evidence="1">
    <location>
        <position position="184"/>
    </location>
    <ligand>
        <name>thiamine diphosphate</name>
        <dbReference type="ChEBI" id="CHEBI:58937"/>
    </ligand>
</feature>
<feature type="binding site" evidence="1">
    <location>
        <position position="293"/>
    </location>
    <ligand>
        <name>thiamine diphosphate</name>
        <dbReference type="ChEBI" id="CHEBI:58937"/>
    </ligand>
</feature>
<feature type="binding site" evidence="1">
    <location>
        <position position="375"/>
    </location>
    <ligand>
        <name>thiamine diphosphate</name>
        <dbReference type="ChEBI" id="CHEBI:58937"/>
    </ligand>
</feature>
<comment type="function">
    <text evidence="1">Catalyzes the acyloin condensation reaction between C atoms 2 and 3 of pyruvate and glyceraldehyde 3-phosphate to yield 1-deoxy-D-xylulose-5-phosphate (DXP).</text>
</comment>
<comment type="catalytic activity">
    <reaction evidence="1">
        <text>D-glyceraldehyde 3-phosphate + pyruvate + H(+) = 1-deoxy-D-xylulose 5-phosphate + CO2</text>
        <dbReference type="Rhea" id="RHEA:12605"/>
        <dbReference type="ChEBI" id="CHEBI:15361"/>
        <dbReference type="ChEBI" id="CHEBI:15378"/>
        <dbReference type="ChEBI" id="CHEBI:16526"/>
        <dbReference type="ChEBI" id="CHEBI:57792"/>
        <dbReference type="ChEBI" id="CHEBI:59776"/>
        <dbReference type="EC" id="2.2.1.7"/>
    </reaction>
</comment>
<comment type="cofactor">
    <cofactor evidence="1">
        <name>Mg(2+)</name>
        <dbReference type="ChEBI" id="CHEBI:18420"/>
    </cofactor>
    <text evidence="1">Binds 1 Mg(2+) ion per subunit.</text>
</comment>
<comment type="cofactor">
    <cofactor evidence="1">
        <name>thiamine diphosphate</name>
        <dbReference type="ChEBI" id="CHEBI:58937"/>
    </cofactor>
    <text evidence="1">Binds 1 thiamine pyrophosphate per subunit.</text>
</comment>
<comment type="pathway">
    <text evidence="1">Metabolic intermediate biosynthesis; 1-deoxy-D-xylulose 5-phosphate biosynthesis; 1-deoxy-D-xylulose 5-phosphate from D-glyceraldehyde 3-phosphate and pyruvate: step 1/1.</text>
</comment>
<comment type="subunit">
    <text evidence="1">Homodimer.</text>
</comment>
<comment type="similarity">
    <text evidence="1">Belongs to the transketolase family. DXPS subfamily.</text>
</comment>
<accession>Q16CP0</accession>
<reference key="1">
    <citation type="journal article" date="2007" name="J. Bacteriol.">
        <title>The complete genome sequence of Roseobacter denitrificans reveals a mixotrophic rather than photosynthetic metabolism.</title>
        <authorList>
            <person name="Swingley W.D."/>
            <person name="Sadekar S."/>
            <person name="Mastrian S.D."/>
            <person name="Matthies H.J."/>
            <person name="Hao J."/>
            <person name="Ramos H."/>
            <person name="Acharya C.R."/>
            <person name="Conrad A.L."/>
            <person name="Taylor H.L."/>
            <person name="Dejesa L.C."/>
            <person name="Shah M.K."/>
            <person name="O'Huallachain M.E."/>
            <person name="Lince M.T."/>
            <person name="Blankenship R.E."/>
            <person name="Beatty J.T."/>
            <person name="Touchman J.W."/>
        </authorList>
    </citation>
    <scope>NUCLEOTIDE SEQUENCE [LARGE SCALE GENOMIC DNA]</scope>
    <source>
        <strain>ATCC 33942 / OCh 114</strain>
    </source>
</reference>
<sequence>MTDMPKTPLLDLVHRPADMKGLSDRQLVQLADELRSETVSAVSVTGGHLGAGLGVVELTVALHAVFDTPRDKIIWDVGHQCYPHKILTERRDRIRTLRMKGGLSGFTKRSESPYDPFGAAHSSTSISAALGFAVARDLGGVVPEGLGDAIAVIGDGSMSAGMAYEAMNNAGHLKKRMIVILNDNEMSIAPPTGAMSSYLSRLYSGEPFQDFKAAAKGAVSLLPEPFREGAKRAKDMLKGMAVGGTLFEELGFSYIGPIDGHDLDQLLPLLRTVKARATGPIMIHALTKKGKGYAPAETARDKGHATAKFDVLTGQQTKAPSNAPSYTKVFAQSLLEEATKDDKICAVTAAMPDGTGLNLFAERFPSRCFDVGIAEQHGVTFSAALAAGGMKPFCAMYSTFLQRGYDQVVHDVAIQRLPVRFAIDRAGLVGADGATHAGSFDIAYLANLPGFVVMAAADEAELKHMVATAVAHDDGPIAFRFPRGEGNGVDMPEVGEVLEIGKGRIITEGTRVAILSFGTRLAEVQKAGEALAARGITPTIADARFAKPLDREMILDLVANHEALITVEEGAIGGFGSHVAQLLSDEGVFDTGFKYRSMVLPDIFIDQSSPADMYAVAGMNAADIETKVLSVLGIAQIGEARA</sequence>
<evidence type="ECO:0000255" key="1">
    <source>
        <dbReference type="HAMAP-Rule" id="MF_00315"/>
    </source>
</evidence>
<gene>
    <name evidence="1" type="primary">dxs2</name>
    <name type="ordered locus">RD1_0548</name>
</gene>
<keyword id="KW-0414">Isoprene biosynthesis</keyword>
<keyword id="KW-0460">Magnesium</keyword>
<keyword id="KW-0479">Metal-binding</keyword>
<keyword id="KW-1185">Reference proteome</keyword>
<keyword id="KW-0784">Thiamine biosynthesis</keyword>
<keyword id="KW-0786">Thiamine pyrophosphate</keyword>
<keyword id="KW-0808">Transferase</keyword>
<name>DXS2_ROSDO</name>
<proteinExistence type="inferred from homology"/>
<dbReference type="EC" id="2.2.1.7" evidence="1"/>
<dbReference type="EMBL" id="CP000362">
    <property type="protein sequence ID" value="ABG30253.1"/>
    <property type="molecule type" value="Genomic_DNA"/>
</dbReference>
<dbReference type="RefSeq" id="WP_011566875.1">
    <property type="nucleotide sequence ID" value="NC_008209.1"/>
</dbReference>
<dbReference type="SMR" id="Q16CP0"/>
<dbReference type="STRING" id="375451.RD1_0548"/>
<dbReference type="KEGG" id="rde:RD1_0548"/>
<dbReference type="eggNOG" id="COG1154">
    <property type="taxonomic scope" value="Bacteria"/>
</dbReference>
<dbReference type="HOGENOM" id="CLU_009227_1_4_5"/>
<dbReference type="OrthoDB" id="9803371at2"/>
<dbReference type="UniPathway" id="UPA00064">
    <property type="reaction ID" value="UER00091"/>
</dbReference>
<dbReference type="Proteomes" id="UP000007029">
    <property type="component" value="Chromosome"/>
</dbReference>
<dbReference type="GO" id="GO:0008661">
    <property type="term" value="F:1-deoxy-D-xylulose-5-phosphate synthase activity"/>
    <property type="evidence" value="ECO:0007669"/>
    <property type="project" value="UniProtKB-UniRule"/>
</dbReference>
<dbReference type="GO" id="GO:0000287">
    <property type="term" value="F:magnesium ion binding"/>
    <property type="evidence" value="ECO:0007669"/>
    <property type="project" value="UniProtKB-UniRule"/>
</dbReference>
<dbReference type="GO" id="GO:0030976">
    <property type="term" value="F:thiamine pyrophosphate binding"/>
    <property type="evidence" value="ECO:0007669"/>
    <property type="project" value="UniProtKB-UniRule"/>
</dbReference>
<dbReference type="GO" id="GO:0052865">
    <property type="term" value="P:1-deoxy-D-xylulose 5-phosphate biosynthetic process"/>
    <property type="evidence" value="ECO:0007669"/>
    <property type="project" value="UniProtKB-UniPathway"/>
</dbReference>
<dbReference type="GO" id="GO:0019682">
    <property type="term" value="P:glyceraldehyde-3-phosphate metabolic process"/>
    <property type="evidence" value="ECO:0007669"/>
    <property type="project" value="UniProtKB-ARBA"/>
</dbReference>
<dbReference type="GO" id="GO:0016114">
    <property type="term" value="P:terpenoid biosynthetic process"/>
    <property type="evidence" value="ECO:0007669"/>
    <property type="project" value="UniProtKB-UniRule"/>
</dbReference>
<dbReference type="GO" id="GO:0009228">
    <property type="term" value="P:thiamine biosynthetic process"/>
    <property type="evidence" value="ECO:0007669"/>
    <property type="project" value="UniProtKB-UniRule"/>
</dbReference>
<dbReference type="CDD" id="cd02007">
    <property type="entry name" value="TPP_DXS"/>
    <property type="match status" value="1"/>
</dbReference>
<dbReference type="CDD" id="cd07033">
    <property type="entry name" value="TPP_PYR_DXS_TK_like"/>
    <property type="match status" value="1"/>
</dbReference>
<dbReference type="FunFam" id="3.40.50.920:FF:000002">
    <property type="entry name" value="1-deoxy-D-xylulose-5-phosphate synthase"/>
    <property type="match status" value="1"/>
</dbReference>
<dbReference type="FunFam" id="3.40.50.970:FF:000005">
    <property type="entry name" value="1-deoxy-D-xylulose-5-phosphate synthase"/>
    <property type="match status" value="1"/>
</dbReference>
<dbReference type="Gene3D" id="3.40.50.920">
    <property type="match status" value="1"/>
</dbReference>
<dbReference type="Gene3D" id="3.40.50.970">
    <property type="match status" value="2"/>
</dbReference>
<dbReference type="HAMAP" id="MF_00315">
    <property type="entry name" value="DXP_synth"/>
    <property type="match status" value="1"/>
</dbReference>
<dbReference type="InterPro" id="IPR005477">
    <property type="entry name" value="Dxylulose-5-P_synthase"/>
</dbReference>
<dbReference type="InterPro" id="IPR029061">
    <property type="entry name" value="THDP-binding"/>
</dbReference>
<dbReference type="InterPro" id="IPR009014">
    <property type="entry name" value="Transketo_C/PFOR_II"/>
</dbReference>
<dbReference type="InterPro" id="IPR005475">
    <property type="entry name" value="Transketolase-like_Pyr-bd"/>
</dbReference>
<dbReference type="InterPro" id="IPR020826">
    <property type="entry name" value="Transketolase_BS"/>
</dbReference>
<dbReference type="InterPro" id="IPR033248">
    <property type="entry name" value="Transketolase_C"/>
</dbReference>
<dbReference type="InterPro" id="IPR049557">
    <property type="entry name" value="Transketolase_CS"/>
</dbReference>
<dbReference type="NCBIfam" id="TIGR00204">
    <property type="entry name" value="dxs"/>
    <property type="match status" value="1"/>
</dbReference>
<dbReference type="NCBIfam" id="NF003933">
    <property type="entry name" value="PRK05444.2-2"/>
    <property type="match status" value="1"/>
</dbReference>
<dbReference type="PANTHER" id="PTHR43322">
    <property type="entry name" value="1-D-DEOXYXYLULOSE 5-PHOSPHATE SYNTHASE-RELATED"/>
    <property type="match status" value="1"/>
</dbReference>
<dbReference type="PANTHER" id="PTHR43322:SF5">
    <property type="entry name" value="1-DEOXY-D-XYLULOSE-5-PHOSPHATE SYNTHASE, CHLOROPLASTIC"/>
    <property type="match status" value="1"/>
</dbReference>
<dbReference type="Pfam" id="PF13292">
    <property type="entry name" value="DXP_synthase_N"/>
    <property type="match status" value="1"/>
</dbReference>
<dbReference type="Pfam" id="PF02779">
    <property type="entry name" value="Transket_pyr"/>
    <property type="match status" value="1"/>
</dbReference>
<dbReference type="Pfam" id="PF02780">
    <property type="entry name" value="Transketolase_C"/>
    <property type="match status" value="1"/>
</dbReference>
<dbReference type="SMART" id="SM00861">
    <property type="entry name" value="Transket_pyr"/>
    <property type="match status" value="1"/>
</dbReference>
<dbReference type="SUPFAM" id="SSF52518">
    <property type="entry name" value="Thiamin diphosphate-binding fold (THDP-binding)"/>
    <property type="match status" value="2"/>
</dbReference>
<dbReference type="SUPFAM" id="SSF52922">
    <property type="entry name" value="TK C-terminal domain-like"/>
    <property type="match status" value="1"/>
</dbReference>
<dbReference type="PROSITE" id="PS00801">
    <property type="entry name" value="TRANSKETOLASE_1"/>
    <property type="match status" value="1"/>
</dbReference>
<dbReference type="PROSITE" id="PS00802">
    <property type="entry name" value="TRANSKETOLASE_2"/>
    <property type="match status" value="1"/>
</dbReference>